<feature type="chain" id="PRO_0000128028" description="Uncharacterized protein AF_1576">
    <location>
        <begin position="1"/>
        <end position="82"/>
    </location>
</feature>
<organism>
    <name type="scientific">Archaeoglobus fulgidus (strain ATCC 49558 / DSM 4304 / JCM 9628 / NBRC 100126 / VC-16)</name>
    <dbReference type="NCBI Taxonomy" id="224325"/>
    <lineage>
        <taxon>Archaea</taxon>
        <taxon>Methanobacteriati</taxon>
        <taxon>Methanobacteriota</taxon>
        <taxon>Archaeoglobi</taxon>
        <taxon>Archaeoglobales</taxon>
        <taxon>Archaeoglobaceae</taxon>
        <taxon>Archaeoglobus</taxon>
    </lineage>
</organism>
<sequence length="82" mass="9272">MDITPALFEHAVFSNRNSGLPEPLHGRDGLCWPRHPPDALCLRCGVIEAGHWQYSLYPWENLCPFSAYRSLFFSQSSPPLAV</sequence>
<name>Y1576_ARCFU</name>
<reference key="1">
    <citation type="journal article" date="1997" name="Nature">
        <title>The complete genome sequence of the hyperthermophilic, sulphate-reducing archaeon Archaeoglobus fulgidus.</title>
        <authorList>
            <person name="Klenk H.-P."/>
            <person name="Clayton R.A."/>
            <person name="Tomb J.-F."/>
            <person name="White O."/>
            <person name="Nelson K.E."/>
            <person name="Ketchum K.A."/>
            <person name="Dodson R.J."/>
            <person name="Gwinn M.L."/>
            <person name="Hickey E.K."/>
            <person name="Peterson J.D."/>
            <person name="Richardson D.L."/>
            <person name="Kerlavage A.R."/>
            <person name="Graham D.E."/>
            <person name="Kyrpides N.C."/>
            <person name="Fleischmann R.D."/>
            <person name="Quackenbush J."/>
            <person name="Lee N.H."/>
            <person name="Sutton G.G."/>
            <person name="Gill S.R."/>
            <person name="Kirkness E.F."/>
            <person name="Dougherty B.A."/>
            <person name="McKenney K."/>
            <person name="Adams M.D."/>
            <person name="Loftus B.J."/>
            <person name="Peterson S.N."/>
            <person name="Reich C.I."/>
            <person name="McNeil L.K."/>
            <person name="Badger J.H."/>
            <person name="Glodek A."/>
            <person name="Zhou L."/>
            <person name="Overbeek R."/>
            <person name="Gocayne J.D."/>
            <person name="Weidman J.F."/>
            <person name="McDonald L.A."/>
            <person name="Utterback T.R."/>
            <person name="Cotton M.D."/>
            <person name="Spriggs T."/>
            <person name="Artiach P."/>
            <person name="Kaine B.P."/>
            <person name="Sykes S.M."/>
            <person name="Sadow P.W."/>
            <person name="D'Andrea K.P."/>
            <person name="Bowman C."/>
            <person name="Fujii C."/>
            <person name="Garland S.A."/>
            <person name="Mason T.M."/>
            <person name="Olsen G.J."/>
            <person name="Fraser C.M."/>
            <person name="Smith H.O."/>
            <person name="Woese C.R."/>
            <person name="Venter J.C."/>
        </authorList>
    </citation>
    <scope>NUCLEOTIDE SEQUENCE [LARGE SCALE GENOMIC DNA]</scope>
    <source>
        <strain>ATCC 49558 / DSM 4304 / JCM 9628 / NBRC 100126 / VC-16</strain>
    </source>
</reference>
<proteinExistence type="predicted"/>
<keyword id="KW-1185">Reference proteome</keyword>
<dbReference type="EMBL" id="AE000782">
    <property type="protein sequence ID" value="AAB89680.1"/>
    <property type="molecule type" value="Genomic_DNA"/>
</dbReference>
<dbReference type="PIR" id="G69446">
    <property type="entry name" value="G69446"/>
</dbReference>
<dbReference type="STRING" id="224325.AF_1576"/>
<dbReference type="PaxDb" id="224325-AF_1576"/>
<dbReference type="EnsemblBacteria" id="AAB89680">
    <property type="protein sequence ID" value="AAB89680"/>
    <property type="gene ID" value="AF_1576"/>
</dbReference>
<dbReference type="KEGG" id="afu:AF_1576"/>
<dbReference type="HOGENOM" id="CLU_2550047_0_0_2"/>
<dbReference type="Proteomes" id="UP000002199">
    <property type="component" value="Chromosome"/>
</dbReference>
<gene>
    <name type="ordered locus">AF_1576</name>
</gene>
<accession>O28696</accession>
<protein>
    <recommendedName>
        <fullName>Uncharacterized protein AF_1576</fullName>
    </recommendedName>
</protein>